<name>SLB_PROTO</name>
<evidence type="ECO:0000255" key="1">
    <source>
        <dbReference type="PROSITE-ProRule" id="PRU00040"/>
    </source>
</evidence>
<evidence type="ECO:0000269" key="2">
    <source>
    </source>
</evidence>
<evidence type="ECO:0000305" key="3"/>
<feature type="chain" id="PRO_0000355288" description="Snaclec tokaracetin subunit beta">
    <location>
        <begin position="1"/>
        <end position="40" status="greater than"/>
    </location>
</feature>
<feature type="domain" description="C-type lectin" evidence="1">
    <location>
        <begin position="9"/>
        <end position="40" status="greater than"/>
    </location>
</feature>
<feature type="disulfide bond" evidence="1">
    <location>
        <begin position="2"/>
        <end position="13"/>
    </location>
</feature>
<feature type="non-terminal residue">
    <location>
        <position position="40"/>
    </location>
</feature>
<proteinExistence type="evidence at protein level"/>
<organism>
    <name type="scientific">Protobothrops tokarensis</name>
    <name type="common">Tokara habu</name>
    <name type="synonym">Trimeresurus tokarensis</name>
    <dbReference type="NCBI Taxonomy" id="61225"/>
    <lineage>
        <taxon>Eukaryota</taxon>
        <taxon>Metazoa</taxon>
        <taxon>Chordata</taxon>
        <taxon>Craniata</taxon>
        <taxon>Vertebrata</taxon>
        <taxon>Euteleostomi</taxon>
        <taxon>Lepidosauria</taxon>
        <taxon>Squamata</taxon>
        <taxon>Bifurcata</taxon>
        <taxon>Unidentata</taxon>
        <taxon>Episquamata</taxon>
        <taxon>Toxicofera</taxon>
        <taxon>Serpentes</taxon>
        <taxon>Colubroidea</taxon>
        <taxon>Viperidae</taxon>
        <taxon>Crotalinae</taxon>
        <taxon>Protobothrops</taxon>
    </lineage>
</organism>
<sequence length="40" mass="4901">DCPSDWSSYDEHCYRVFQQKMNWEDAEKFCTQQHKGXHLX</sequence>
<reference key="1">
    <citation type="journal article" date="1995" name="Biochem. J.">
        <title>Tokaracetin, a new platelet antagonist that binds to platelet glycoprotein Ib and inhibits von Willebrand factor-dependent shear-induced platelet aggregation.</title>
        <authorList>
            <person name="Kawasaki T."/>
            <person name="Taniuchi Y."/>
            <person name="Hisamichi N."/>
            <person name="Fujimura Y."/>
            <person name="Suzuki M."/>
            <person name="Titani K."/>
            <person name="Sakai Y."/>
            <person name="Kaku S."/>
            <person name="Satoh N."/>
            <person name="Takenaka T."/>
            <person name="Handa M."/>
            <person name="Sawai Y."/>
        </authorList>
    </citation>
    <scope>PROTEIN SEQUENCE</scope>
    <scope>FUNCTION</scope>
    <scope>SUBUNIT</scope>
    <source>
        <tissue>Venom</tissue>
    </source>
</reference>
<accession>Q7LZI6</accession>
<dbReference type="PIR" id="S56007">
    <property type="entry name" value="S56007"/>
</dbReference>
<dbReference type="GO" id="GO:0005576">
    <property type="term" value="C:extracellular region"/>
    <property type="evidence" value="ECO:0007669"/>
    <property type="project" value="UniProtKB-SubCell"/>
</dbReference>
<dbReference type="GO" id="GO:0090729">
    <property type="term" value="F:toxin activity"/>
    <property type="evidence" value="ECO:0007669"/>
    <property type="project" value="UniProtKB-KW"/>
</dbReference>
<dbReference type="Gene3D" id="3.10.100.10">
    <property type="entry name" value="Mannose-Binding Protein A, subunit A"/>
    <property type="match status" value="1"/>
</dbReference>
<dbReference type="InterPro" id="IPR016186">
    <property type="entry name" value="C-type_lectin-like/link_sf"/>
</dbReference>
<dbReference type="InterPro" id="IPR016187">
    <property type="entry name" value="CTDL_fold"/>
</dbReference>
<dbReference type="SUPFAM" id="SSF56436">
    <property type="entry name" value="C-type lectin-like"/>
    <property type="match status" value="1"/>
</dbReference>
<keyword id="KW-0903">Direct protein sequencing</keyword>
<keyword id="KW-1015">Disulfide bond</keyword>
<keyword id="KW-1199">Hemostasis impairing toxin</keyword>
<keyword id="KW-1201">Platelet aggregation inhibiting toxin</keyword>
<keyword id="KW-0964">Secreted</keyword>
<keyword id="KW-0800">Toxin</keyword>
<protein>
    <recommendedName>
        <fullName>Snaclec tokaracetin subunit beta</fullName>
    </recommendedName>
</protein>
<comment type="function">
    <text evidence="2">Platelet antagonist that specifically and reversibly binds to a site on platelet glycoprotein Ibalpha (GP1BA) close to or identical with the site for vWF binding. It inhibits the binding of vWF to platelets and vWF-dependent shear-induced platelet aggregation.</text>
</comment>
<comment type="subunit">
    <text evidence="2">Heterodimer of subunits alpha and beta; disulfide-linked.</text>
</comment>
<comment type="subcellular location">
    <subcellularLocation>
        <location>Secreted</location>
    </subcellularLocation>
</comment>
<comment type="tissue specificity">
    <text>Expressed by the venom gland.</text>
</comment>
<comment type="similarity">
    <text evidence="3">Belongs to the snaclec family.</text>
</comment>